<protein>
    <recommendedName>
        <fullName>Basic phospholipase A2 CB2</fullName>
        <shortName>svPLA2</shortName>
        <ecNumber>3.1.1.4</ecNumber>
    </recommendedName>
    <alternativeName>
        <fullName>Phosphatidylcholine 2-acylhydrolase</fullName>
    </alternativeName>
</protein>
<sequence length="23" mass="2807">SLLQFNKMIKFETRKNAIPFYAF</sequence>
<organism>
    <name type="scientific">Crotalus mitchellii mitchellii</name>
    <name type="common">San Lucan speckled rattlesnake</name>
    <dbReference type="NCBI Taxonomy" id="384067"/>
    <lineage>
        <taxon>Eukaryota</taxon>
        <taxon>Metazoa</taxon>
        <taxon>Chordata</taxon>
        <taxon>Craniata</taxon>
        <taxon>Vertebrata</taxon>
        <taxon>Euteleostomi</taxon>
        <taxon>Lepidosauria</taxon>
        <taxon>Squamata</taxon>
        <taxon>Bifurcata</taxon>
        <taxon>Unidentata</taxon>
        <taxon>Episquamata</taxon>
        <taxon>Toxicofera</taxon>
        <taxon>Serpentes</taxon>
        <taxon>Colubroidea</taxon>
        <taxon>Viperidae</taxon>
        <taxon>Crotalinae</taxon>
        <taxon>Crotalus</taxon>
    </lineage>
</organism>
<accession>P0DJN4</accession>
<proteinExistence type="evidence at protein level"/>
<reference key="1">
    <citation type="journal article" date="2004" name="Biochem. J.">
        <title>Molecular evolution and structure-function relationships of crotoxin-like and asparagine-6-containing phospholipases A2 in pit viper venoms.</title>
        <authorList>
            <person name="Chen Y.-H."/>
            <person name="Wang Y.-M."/>
            <person name="Hseu M.-J."/>
            <person name="Tsai I.-H."/>
        </authorList>
    </citation>
    <scope>PROTEIN SEQUENCE</scope>
    <scope>FUNCTION</scope>
    <scope>BIOPHYSICOCHEMICAL PROPERTIES</scope>
    <scope>SUBUNIT</scope>
    <scope>MASS SPECTROMETRY</scope>
    <source>
        <tissue>Venom</tissue>
    </source>
</reference>
<dbReference type="EC" id="3.1.1.4"/>
<dbReference type="GO" id="GO:0005576">
    <property type="term" value="C:extracellular region"/>
    <property type="evidence" value="ECO:0007669"/>
    <property type="project" value="UniProtKB-SubCell"/>
</dbReference>
<dbReference type="GO" id="GO:0046872">
    <property type="term" value="F:metal ion binding"/>
    <property type="evidence" value="ECO:0007669"/>
    <property type="project" value="UniProtKB-KW"/>
</dbReference>
<dbReference type="GO" id="GO:0004623">
    <property type="term" value="F:phospholipase A2 activity"/>
    <property type="evidence" value="ECO:0007669"/>
    <property type="project" value="UniProtKB-EC"/>
</dbReference>
<dbReference type="GO" id="GO:0090729">
    <property type="term" value="F:toxin activity"/>
    <property type="evidence" value="ECO:0007669"/>
    <property type="project" value="UniProtKB-KW"/>
</dbReference>
<dbReference type="GO" id="GO:0016042">
    <property type="term" value="P:lipid catabolic process"/>
    <property type="evidence" value="ECO:0007669"/>
    <property type="project" value="UniProtKB-KW"/>
</dbReference>
<feature type="chain" id="PRO_0000418569" description="Basic phospholipase A2 CB2">
    <location>
        <begin position="1"/>
        <end position="23" status="greater than"/>
    </location>
</feature>
<feature type="non-terminal residue">
    <location>
        <position position="23"/>
    </location>
</feature>
<name>PA2B2_CROMT</name>
<comment type="function">
    <text evidence="2">Snake venom phospholipase A2 (PLA2) that shows presynaptic neurotoxicity. PLA2 catalyzes the calcium-dependent hydrolysis of the 2-acyl groups in 3-sn-phosphoglycerides.</text>
</comment>
<comment type="catalytic activity">
    <reaction>
        <text>a 1,2-diacyl-sn-glycero-3-phosphocholine + H2O = a 1-acyl-sn-glycero-3-phosphocholine + a fatty acid + H(+)</text>
        <dbReference type="Rhea" id="RHEA:15801"/>
        <dbReference type="ChEBI" id="CHEBI:15377"/>
        <dbReference type="ChEBI" id="CHEBI:15378"/>
        <dbReference type="ChEBI" id="CHEBI:28868"/>
        <dbReference type="ChEBI" id="CHEBI:57643"/>
        <dbReference type="ChEBI" id="CHEBI:58168"/>
        <dbReference type="EC" id="3.1.1.4"/>
    </reaction>
</comment>
<comment type="cofactor">
    <cofactor evidence="1">
        <name>Ca(2+)</name>
        <dbReference type="ChEBI" id="CHEBI:29108"/>
    </cofactor>
    <text evidence="1">Binds 1 Ca(2+) ion.</text>
</comment>
<comment type="biophysicochemical properties">
    <kinetics>
        <Vmax evidence="2">430.0 umol/min/mg enzyme with DPPC + deoxycholate as substrate (at pH 7.4 and 37 degrees Celsius)</Vmax>
        <Vmax evidence="2">123.0 umol/min/mg enzyme with DPPC + Triton X-100 as substrate (at pH 7.4 and 37 degrees Celsius)</Vmax>
        <text>When tested as a monomer.</text>
    </kinetics>
</comment>
<comment type="subunit">
    <text evidence="2">Heterodimer of an acidic subunit and a basic chain. The acidic subunit is non-toxic, without enzymatic activity and comprises 3 peptides that are cross-linked by 7 disulfide bridges. The basic subunit is toxic, has phospholipase A2 activity and is composed of a single chain.</text>
</comment>
<comment type="subcellular location">
    <subcellularLocation>
        <location>Secreted</location>
    </subcellularLocation>
</comment>
<comment type="tissue specificity">
    <text>Expressed by the venom gland.</text>
</comment>
<comment type="PTM">
    <text evidence="1">Contains 7 disulfide bonds.</text>
</comment>
<comment type="mass spectrometry" mass="14244.0" method="Electrospray" evidence="2"/>
<comment type="similarity">
    <text evidence="3">Belongs to the phospholipase A2 family. Group II subfamily.</text>
</comment>
<keyword id="KW-0106">Calcium</keyword>
<keyword id="KW-0903">Direct protein sequencing</keyword>
<keyword id="KW-1015">Disulfide bond</keyword>
<keyword id="KW-0378">Hydrolase</keyword>
<keyword id="KW-0442">Lipid degradation</keyword>
<keyword id="KW-0443">Lipid metabolism</keyword>
<keyword id="KW-0479">Metal-binding</keyword>
<keyword id="KW-0528">Neurotoxin</keyword>
<keyword id="KW-0638">Presynaptic neurotoxin</keyword>
<keyword id="KW-0964">Secreted</keyword>
<keyword id="KW-0800">Toxin</keyword>
<evidence type="ECO:0000250" key="1"/>
<evidence type="ECO:0000269" key="2">
    <source>
    </source>
</evidence>
<evidence type="ECO:0000305" key="3"/>